<feature type="chain" id="PRO_0000190991" description="GTPase IMAP family member 5">
    <location>
        <begin position="1"/>
        <end position="308"/>
    </location>
</feature>
<feature type="topological domain" description="Cytoplasmic" evidence="4">
    <location>
        <begin position="1"/>
        <end position="283"/>
    </location>
</feature>
<feature type="transmembrane region" description="Helical; Anchor for type IV membrane protein" evidence="4">
    <location>
        <begin position="284"/>
        <end position="304"/>
    </location>
</feature>
<feature type="topological domain" description="Mitochondrial intermembrane" evidence="4">
    <location>
        <begin position="305"/>
        <end position="308"/>
    </location>
</feature>
<feature type="domain" description="AIG1-type G" evidence="5">
    <location>
        <begin position="24"/>
        <end position="227"/>
    </location>
</feature>
<feature type="binding site" evidence="2">
    <location>
        <begin position="33"/>
        <end position="41"/>
    </location>
    <ligand>
        <name>GTP</name>
        <dbReference type="ChEBI" id="CHEBI:37565"/>
    </ligand>
</feature>
<feature type="binding site" evidence="3">
    <location>
        <position position="54"/>
    </location>
    <ligand>
        <name>GTP</name>
        <dbReference type="ChEBI" id="CHEBI:37565"/>
    </ligand>
</feature>
<feature type="binding site" evidence="2">
    <location>
        <begin position="151"/>
        <end position="153"/>
    </location>
    <ligand>
        <name>GTP</name>
        <dbReference type="ChEBI" id="CHEBI:37565"/>
    </ligand>
</feature>
<feature type="binding site" evidence="2">
    <location>
        <position position="188"/>
    </location>
    <ligand>
        <name>GTP</name>
        <dbReference type="ChEBI" id="CHEBI:37565"/>
    </ligand>
</feature>
<feature type="sequence conflict" description="In Ref. 3; AAH95995." evidence="14" ref="3">
    <original>D</original>
    <variation>V</variation>
    <location>
        <position position="94"/>
    </location>
</feature>
<keyword id="KW-0967">Endosome</keyword>
<keyword id="KW-0342">GTP-binding</keyword>
<keyword id="KW-0458">Lysosome</keyword>
<keyword id="KW-0472">Membrane</keyword>
<keyword id="KW-0547">Nucleotide-binding</keyword>
<keyword id="KW-1185">Reference proteome</keyword>
<keyword id="KW-0812">Transmembrane</keyword>
<keyword id="KW-1133">Transmembrane helix</keyword>
<organism>
    <name type="scientific">Mus musculus</name>
    <name type="common">Mouse</name>
    <dbReference type="NCBI Taxonomy" id="10090"/>
    <lineage>
        <taxon>Eukaryota</taxon>
        <taxon>Metazoa</taxon>
        <taxon>Chordata</taxon>
        <taxon>Craniata</taxon>
        <taxon>Vertebrata</taxon>
        <taxon>Euteleostomi</taxon>
        <taxon>Mammalia</taxon>
        <taxon>Eutheria</taxon>
        <taxon>Euarchontoglires</taxon>
        <taxon>Glires</taxon>
        <taxon>Rodentia</taxon>
        <taxon>Myomorpha</taxon>
        <taxon>Muroidea</taxon>
        <taxon>Muridae</taxon>
        <taxon>Murinae</taxon>
        <taxon>Mus</taxon>
        <taxon>Mus</taxon>
    </lineage>
</organism>
<comment type="function">
    <text evidence="1 6 7 9 10 11 12">Plays a role in T lymphocyte development and the optimal generation of CD4/CD8 double-positive thymocytes (PubMed:16509771). Inhibitor of GSK3A. May act by sequestering GSK3A in cytoplasmic vesicles and impairing its translocation to the nucleus. Consequently, impairs GSK3A-dependent transcriptional program and regulation of the DNA damage response occurring during T cells proliferation (PubMed:29382851). Required for the survival of bone marrow hematopoietic stem cells, as well as of peripheral T cells, natural killer (NK) and NK T-cell development and the maintenance of normal liver function (PubMed:18796632, PubMed:21502331). May promote the survival of mature T lymphocytes upon cytokine withdrawal (PubMed:16509771). May regulate Ca(2+) homeostasis by modulating lysosomal Ca(2+) stores, preventing its accumulation in the absence of T cell activation (By similarity). May play a role in mitochondrial DNA segregation in hematopoietic tissues (PubMed:25808953). Is a regulator of liver endothelial cell homeostasis (PubMed:33956074).</text>
</comment>
<comment type="subunit">
    <text evidence="1 6 9">Interacts with BAD, BAK1, BAX, BCL2, BCL2L1/Bcl-xL and BCL2L11/BimEL (PubMed:16509771, PubMed:21502331). The interaction with BAX is increased, when cells initiate apoptosis upon IL2 withdrawal (PubMed:16509771). Forms a complex with BCL2L1 or MCL1 and HSPA8/HSC70; the interaction between HSPA8 and BCL2L1 or MCL1 is impaired in the absence of GIMAP5 (PubMed:21502331). May interact (via N-terminus) with microtubules (By similarity).</text>
</comment>
<comment type="interaction">
    <interactant intactId="EBI-15572348">
        <id>Q8BWF2</id>
    </interactant>
    <interactant intactId="EBI-526314">
        <id>P10417</id>
        <label>Bcl2</label>
    </interactant>
    <organismsDiffer>false</organismsDiffer>
    <experiments>3</experiments>
</comment>
<comment type="interaction">
    <interactant intactId="EBI-15572348">
        <id>Q8BWF2</id>
    </interactant>
    <interactant intactId="EBI-516580">
        <id>Q07812</id>
        <label>BAX</label>
    </interactant>
    <organismsDiffer>true</organismsDiffer>
    <experiments>2</experiments>
</comment>
<comment type="interaction">
    <interactant intactId="EBI-15572348">
        <id>Q8BWF2</id>
    </interactant>
    <interactant intactId="EBI-287195">
        <id>Q07817-1</id>
        <label>BCL2L1</label>
    </interactant>
    <organismsDiffer>true</organismsDiffer>
    <experiments>3</experiments>
</comment>
<comment type="subcellular location">
    <subcellularLocation>
        <location evidence="12">Lysosome</location>
    </subcellularLocation>
    <subcellularLocation>
        <location evidence="8 11">Lysosome membrane</location>
        <topology evidence="14">Single-pass type IV membrane protein</topology>
    </subcellularLocation>
    <subcellularLocation>
        <location evidence="8">Endosome</location>
        <location evidence="8">Multivesicular body membrane</location>
        <topology evidence="14">Single-pass type IV membrane protein</topology>
    </subcellularLocation>
    <subcellularLocation>
        <location evidence="1">Endosome membrane</location>
        <topology evidence="1">Single-pass type IV membrane protein</topology>
    </subcellularLocation>
</comment>
<comment type="tissue specificity">
    <text evidence="6 9 12">Expressed in thymus (in thymocytes), spleen (in splenocytes), lymph node and lung (PubMed:16509771). Highly expressed in T lymphocytes (PubMed:16509771, PubMed:21502331). Expressed in B cells and in distinct lineages of hematopoietic bone marrow cells, including natural killer, B, T, myeloid and erythroid lineages (PubMed:21502331). Expressed in liver endothelial cells (PubMed:33956074).</text>
</comment>
<comment type="developmental stage">
    <text evidence="6">Up-regulated upon the maturation of CD4/CD8 double-positive to CD4 single-positive thymocytes.</text>
</comment>
<comment type="disruption phenotype">
    <text evidence="7 9">Knockout mice are born at the expected Mendelian rate, with a normal sex ratio, but have a median survival of only 15 weeks. They exhibit chronic hepatic hematopoiesis and, in later stages, show pronounced hepatocyte apoptosis, leading to lethal liver failure. Loss of GIMAP5 function impairs peripheral T-cell survival, imposes a complete block of natural killer (NK) and NK T-cell development (PubMed:18796632). Mutant mice show progressive multilineage failure of bone marrow and hematopoiesis. Compared with that of wild-type counterparts, the bone marrow contains more hematopoietic stem cells, but fewer lineage-committed hematopoietic progenitors (PubMed:21502331).</text>
</comment>
<comment type="similarity">
    <text evidence="14">Belongs to the TRAFAC class TrmE-Era-EngA-EngB-Septin-like GTPase superfamily. AIG1/Toc34/Toc159-like paraseptin GTPase family. IAN subfamily.</text>
</comment>
<sequence>MEHLQKSTYGTIVQGPEAHCVQESSCLRILLVGKSGCGKSATGNSILRRPAFQSRLRGQSVTRTSQAETGTWEGRSILVVDTPPIFESKAQNQDMDKDIGDCYLLCAPGPHVLLLVTQLGRFTAEDAMAVRMVKEVFGVGVMRHMIVLFTRKEDLEEKSLEEFVTHTDNRSLRSLTQECGRRYCAFNNRASGEEQQGQLAELMALVRRLEQECEGSFHSNDLFLHAEALLREGYSVHQEAYRCYLAKVRQEVEKQRRELEEQEGSWIAKMICTVKSCWSSHTAACALLIVLGLTLLTTFINLCISRCK</sequence>
<name>GIMA5_MOUSE</name>
<accession>Q8BWF2</accession>
<accession>Q501L7</accession>
<accession>Q549X3</accession>
<proteinExistence type="evidence at protein level"/>
<reference key="1">
    <citation type="journal article" date="2006" name="PLoS Biol.">
        <title>IAN family critically regulates survival and development of T lymphocytes.</title>
        <authorList>
            <person name="Nitta T."/>
            <person name="Nasreen M."/>
            <person name="Seike T."/>
            <person name="Goji A."/>
            <person name="Ohigashi I."/>
            <person name="Miyazaki T."/>
            <person name="Ohta T."/>
            <person name="Kanno M."/>
            <person name="Takahama Y."/>
        </authorList>
    </citation>
    <scope>NUCLEOTIDE SEQUENCE [MRNA]</scope>
    <scope>FUNCTION</scope>
    <scope>INTERACTION WITH BAD; BAK1; BAX; BCL2; BCL2L1 AND BCL2L11</scope>
    <scope>DEVELOPMENTAL STAGE</scope>
    <scope>TISSUE SPECIFICITY</scope>
    <source>
        <tissue>Thymocyte</tissue>
    </source>
</reference>
<reference key="2">
    <citation type="journal article" date="2005" name="Science">
        <title>The transcriptional landscape of the mammalian genome.</title>
        <authorList>
            <person name="Carninci P."/>
            <person name="Kasukawa T."/>
            <person name="Katayama S."/>
            <person name="Gough J."/>
            <person name="Frith M.C."/>
            <person name="Maeda N."/>
            <person name="Oyama R."/>
            <person name="Ravasi T."/>
            <person name="Lenhard B."/>
            <person name="Wells C."/>
            <person name="Kodzius R."/>
            <person name="Shimokawa K."/>
            <person name="Bajic V.B."/>
            <person name="Brenner S.E."/>
            <person name="Batalov S."/>
            <person name="Forrest A.R."/>
            <person name="Zavolan M."/>
            <person name="Davis M.J."/>
            <person name="Wilming L.G."/>
            <person name="Aidinis V."/>
            <person name="Allen J.E."/>
            <person name="Ambesi-Impiombato A."/>
            <person name="Apweiler R."/>
            <person name="Aturaliya R.N."/>
            <person name="Bailey T.L."/>
            <person name="Bansal M."/>
            <person name="Baxter L."/>
            <person name="Beisel K.W."/>
            <person name="Bersano T."/>
            <person name="Bono H."/>
            <person name="Chalk A.M."/>
            <person name="Chiu K.P."/>
            <person name="Choudhary V."/>
            <person name="Christoffels A."/>
            <person name="Clutterbuck D.R."/>
            <person name="Crowe M.L."/>
            <person name="Dalla E."/>
            <person name="Dalrymple B.P."/>
            <person name="de Bono B."/>
            <person name="Della Gatta G."/>
            <person name="di Bernardo D."/>
            <person name="Down T."/>
            <person name="Engstrom P."/>
            <person name="Fagiolini M."/>
            <person name="Faulkner G."/>
            <person name="Fletcher C.F."/>
            <person name="Fukushima T."/>
            <person name="Furuno M."/>
            <person name="Futaki S."/>
            <person name="Gariboldi M."/>
            <person name="Georgii-Hemming P."/>
            <person name="Gingeras T.R."/>
            <person name="Gojobori T."/>
            <person name="Green R.E."/>
            <person name="Gustincich S."/>
            <person name="Harbers M."/>
            <person name="Hayashi Y."/>
            <person name="Hensch T.K."/>
            <person name="Hirokawa N."/>
            <person name="Hill D."/>
            <person name="Huminiecki L."/>
            <person name="Iacono M."/>
            <person name="Ikeo K."/>
            <person name="Iwama A."/>
            <person name="Ishikawa T."/>
            <person name="Jakt M."/>
            <person name="Kanapin A."/>
            <person name="Katoh M."/>
            <person name="Kawasawa Y."/>
            <person name="Kelso J."/>
            <person name="Kitamura H."/>
            <person name="Kitano H."/>
            <person name="Kollias G."/>
            <person name="Krishnan S.P."/>
            <person name="Kruger A."/>
            <person name="Kummerfeld S.K."/>
            <person name="Kurochkin I.V."/>
            <person name="Lareau L.F."/>
            <person name="Lazarevic D."/>
            <person name="Lipovich L."/>
            <person name="Liu J."/>
            <person name="Liuni S."/>
            <person name="McWilliam S."/>
            <person name="Madan Babu M."/>
            <person name="Madera M."/>
            <person name="Marchionni L."/>
            <person name="Matsuda H."/>
            <person name="Matsuzawa S."/>
            <person name="Miki H."/>
            <person name="Mignone F."/>
            <person name="Miyake S."/>
            <person name="Morris K."/>
            <person name="Mottagui-Tabar S."/>
            <person name="Mulder N."/>
            <person name="Nakano N."/>
            <person name="Nakauchi H."/>
            <person name="Ng P."/>
            <person name="Nilsson R."/>
            <person name="Nishiguchi S."/>
            <person name="Nishikawa S."/>
            <person name="Nori F."/>
            <person name="Ohara O."/>
            <person name="Okazaki Y."/>
            <person name="Orlando V."/>
            <person name="Pang K.C."/>
            <person name="Pavan W.J."/>
            <person name="Pavesi G."/>
            <person name="Pesole G."/>
            <person name="Petrovsky N."/>
            <person name="Piazza S."/>
            <person name="Reed J."/>
            <person name="Reid J.F."/>
            <person name="Ring B.Z."/>
            <person name="Ringwald M."/>
            <person name="Rost B."/>
            <person name="Ruan Y."/>
            <person name="Salzberg S.L."/>
            <person name="Sandelin A."/>
            <person name="Schneider C."/>
            <person name="Schoenbach C."/>
            <person name="Sekiguchi K."/>
            <person name="Semple C.A."/>
            <person name="Seno S."/>
            <person name="Sessa L."/>
            <person name="Sheng Y."/>
            <person name="Shibata Y."/>
            <person name="Shimada H."/>
            <person name="Shimada K."/>
            <person name="Silva D."/>
            <person name="Sinclair B."/>
            <person name="Sperling S."/>
            <person name="Stupka E."/>
            <person name="Sugiura K."/>
            <person name="Sultana R."/>
            <person name="Takenaka Y."/>
            <person name="Taki K."/>
            <person name="Tammoja K."/>
            <person name="Tan S.L."/>
            <person name="Tang S."/>
            <person name="Taylor M.S."/>
            <person name="Tegner J."/>
            <person name="Teichmann S.A."/>
            <person name="Ueda H.R."/>
            <person name="van Nimwegen E."/>
            <person name="Verardo R."/>
            <person name="Wei C.L."/>
            <person name="Yagi K."/>
            <person name="Yamanishi H."/>
            <person name="Zabarovsky E."/>
            <person name="Zhu S."/>
            <person name="Zimmer A."/>
            <person name="Hide W."/>
            <person name="Bult C."/>
            <person name="Grimmond S.M."/>
            <person name="Teasdale R.D."/>
            <person name="Liu E.T."/>
            <person name="Brusic V."/>
            <person name="Quackenbush J."/>
            <person name="Wahlestedt C."/>
            <person name="Mattick J.S."/>
            <person name="Hume D.A."/>
            <person name="Kai C."/>
            <person name="Sasaki D."/>
            <person name="Tomaru Y."/>
            <person name="Fukuda S."/>
            <person name="Kanamori-Katayama M."/>
            <person name="Suzuki M."/>
            <person name="Aoki J."/>
            <person name="Arakawa T."/>
            <person name="Iida J."/>
            <person name="Imamura K."/>
            <person name="Itoh M."/>
            <person name="Kato T."/>
            <person name="Kawaji H."/>
            <person name="Kawagashira N."/>
            <person name="Kawashima T."/>
            <person name="Kojima M."/>
            <person name="Kondo S."/>
            <person name="Konno H."/>
            <person name="Nakano K."/>
            <person name="Ninomiya N."/>
            <person name="Nishio T."/>
            <person name="Okada M."/>
            <person name="Plessy C."/>
            <person name="Shibata K."/>
            <person name="Shiraki T."/>
            <person name="Suzuki S."/>
            <person name="Tagami M."/>
            <person name="Waki K."/>
            <person name="Watahiki A."/>
            <person name="Okamura-Oho Y."/>
            <person name="Suzuki H."/>
            <person name="Kawai J."/>
            <person name="Hayashizaki Y."/>
        </authorList>
    </citation>
    <scope>NUCLEOTIDE SEQUENCE [LARGE SCALE MRNA]</scope>
    <source>
        <strain>C57BL/6J</strain>
        <tissue>Kidney</tissue>
    </source>
</reference>
<reference key="3">
    <citation type="journal article" date="2004" name="Genome Res.">
        <title>The status, quality, and expansion of the NIH full-length cDNA project: the Mammalian Gene Collection (MGC).</title>
        <authorList>
            <consortium name="The MGC Project Team"/>
        </authorList>
    </citation>
    <scope>NUCLEOTIDE SEQUENCE [LARGE SCALE MRNA]</scope>
    <source>
        <strain>C57BL/6J</strain>
        <tissue>Kidney</tissue>
    </source>
</reference>
<reference key="4">
    <citation type="journal article" date="2008" name="Blood">
        <title>Impaired survival of peripheral T cells, disrupted NK/NKT cell development, and liver failure in mice lacking Gimap5.</title>
        <authorList>
            <person name="Schulteis R.D."/>
            <person name="Chu H."/>
            <person name="Dai X."/>
            <person name="Chen Y."/>
            <person name="Edwards B."/>
            <person name="Haribhai D."/>
            <person name="Williams C.B."/>
            <person name="Malarkannan S."/>
            <person name="Hessner M.J."/>
            <person name="Glisic-Milosavljevic S."/>
            <person name="Jana S."/>
            <person name="Kerschen E.J."/>
            <person name="Ghosh S."/>
            <person name="Wang D."/>
            <person name="Kwitek A.E."/>
            <person name="Lernmark A."/>
            <person name="Gorski J."/>
            <person name="Weiler H."/>
        </authorList>
    </citation>
    <scope>FUNCTION</scope>
    <scope>DISRUPTION PHENOTYPE</scope>
</reference>
<reference key="5">
    <citation type="journal article" date="2010" name="Self/Nonself">
        <title>The autoimmunity-related GIMAP5 GTPase is a lysosome-associated protein.</title>
        <authorList>
            <person name="Wong V.W."/>
            <person name="Saunders A.E."/>
            <person name="Hutchings A."/>
            <person name="Pascall J.C."/>
            <person name="Carter C."/>
            <person name="Bright N.A."/>
            <person name="Walker S.A."/>
            <person name="Ktistakis N.T."/>
            <person name="Butcher G.W."/>
        </authorList>
    </citation>
    <scope>SUBCELLULAR LOCATION</scope>
</reference>
<reference key="6">
    <citation type="journal article" date="2011" name="J. Exp. Med.">
        <title>Critical role for Gimap5 in the survival of mouse hematopoietic stem and progenitor cells.</title>
        <authorList>
            <person name="Chen Y."/>
            <person name="Yu M."/>
            <person name="Dai X."/>
            <person name="Zogg M."/>
            <person name="Wen R."/>
            <person name="Weiler H."/>
            <person name="Wang D."/>
        </authorList>
    </citation>
    <scope>FUNCTION</scope>
    <scope>INTERACTION WITH BCL2; BCL2L1; HSPA8 AND MCL1</scope>
    <scope>TISSUE SPECIFICITY</scope>
    <scope>DISRUPTION PHENOTYPE</scope>
</reference>
<reference key="7">
    <citation type="journal article" date="2015" name="Genetics">
        <title>Quantitative changes in Gimap3 and Gimap5 expression modify mitochondrial DNA segregation in mice.</title>
        <authorList>
            <person name="Jokinen R."/>
            <person name="Lahtinen T."/>
            <person name="Marttinen P."/>
            <person name="Myoehaenen M."/>
            <person name="Ruotsalainen P."/>
            <person name="Yeung N."/>
            <person name="Shvetsova A."/>
            <person name="Kastaniotis A.J."/>
            <person name="Hiltunen J.K."/>
            <person name="Oehman T."/>
            <person name="Nyman T.A."/>
            <person name="Weiler H."/>
            <person name="Battersby B.J."/>
        </authorList>
    </citation>
    <scope>FUNCTION</scope>
    <scope>SUBCELLULAR LOCATION</scope>
</reference>
<reference key="8">
    <citation type="journal article" date="2018" name="Nat. Commun.">
        <title>Gimap5-dependent inactivation of GSK3beta is required for CD4+ T cell homeostasis and prevention of immune pathology.</title>
        <authorList>
            <person name="Patterson A.R."/>
            <person name="Endale M."/>
            <person name="Lampe K."/>
            <person name="Aksoylar H.I."/>
            <person name="Flagg A."/>
            <person name="Woodgett J.R."/>
            <person name="Hildeman D."/>
            <person name="Jordan M.B."/>
            <person name="Singh H."/>
            <person name="Kucuk Z."/>
            <person name="Bleesing J."/>
            <person name="Hoebe K."/>
        </authorList>
    </citation>
    <scope>FUNCTION</scope>
    <scope>SUBCELLULAR LOCATION</scope>
</reference>
<reference key="9">
    <citation type="journal article" date="2021" name="J. Exp. Med.">
        <title>GIMAP5 maintains liver endothelial cell homeostasis and prevents portal hypertension.</title>
        <authorList>
            <person name="Drzewiecki K."/>
            <person name="Choi J."/>
            <person name="Brancale J."/>
            <person name="Leney-Greene M.A."/>
            <person name="Sari S."/>
            <person name="Dalgic B."/>
            <person name="Uenluesoy Aksu A."/>
            <person name="Evirgen Sahin G."/>
            <person name="Ozen A."/>
            <person name="Baris S."/>
            <person name="Karakoc-Aydiner E."/>
            <person name="Jain D."/>
            <person name="Kleiner D."/>
            <person name="Schmalz M."/>
            <person name="Radhakrishnan K."/>
            <person name="Zhang J."/>
            <person name="Hoebe K."/>
            <person name="Su H.C."/>
            <person name="Pereira J.P."/>
            <person name="Lenardo M.J."/>
            <person name="Lifton R.P."/>
            <person name="Vilarinho S."/>
        </authorList>
    </citation>
    <scope>FUNCTION</scope>
    <scope>TISSUE SPECIFICITY</scope>
    <scope>SUBCELLULAR LOCATION</scope>
</reference>
<gene>
    <name type="primary">Gimap5</name>
    <name type="synonym">Ian4l1</name>
    <name evidence="13" type="synonym">Ian5</name>
    <name type="synonym">Imap3</name>
</gene>
<dbReference type="EMBL" id="AB126961">
    <property type="protein sequence ID" value="BAD06929.1"/>
    <property type="molecule type" value="mRNA"/>
</dbReference>
<dbReference type="EMBL" id="AK052694">
    <property type="protein sequence ID" value="BAC35100.1"/>
    <property type="molecule type" value="mRNA"/>
</dbReference>
<dbReference type="EMBL" id="BC095995">
    <property type="protein sequence ID" value="AAH95995.1"/>
    <property type="molecule type" value="mRNA"/>
</dbReference>
<dbReference type="CCDS" id="CCDS20114.1"/>
<dbReference type="RefSeq" id="NP_778200.1">
    <property type="nucleotide sequence ID" value="NM_175035.5"/>
</dbReference>
<dbReference type="RefSeq" id="XP_006506293.1">
    <property type="nucleotide sequence ID" value="XM_006506230.3"/>
</dbReference>
<dbReference type="RefSeq" id="XP_006506294.1">
    <property type="nucleotide sequence ID" value="XM_006506231.3"/>
</dbReference>
<dbReference type="RefSeq" id="XP_006506295.1">
    <property type="nucleotide sequence ID" value="XM_006506232.3"/>
</dbReference>
<dbReference type="SMR" id="Q8BWF2"/>
<dbReference type="DIP" id="DIP-29183N"/>
<dbReference type="FunCoup" id="Q8BWF2">
    <property type="interactions" value="272"/>
</dbReference>
<dbReference type="IntAct" id="Q8BWF2">
    <property type="interactions" value="6"/>
</dbReference>
<dbReference type="STRING" id="10090.ENSMUSP00000056820"/>
<dbReference type="iPTMnet" id="Q8BWF2"/>
<dbReference type="PhosphoSitePlus" id="Q8BWF2"/>
<dbReference type="PaxDb" id="10090-ENSMUSP00000056820"/>
<dbReference type="ProteomicsDB" id="265746"/>
<dbReference type="DNASU" id="317757"/>
<dbReference type="Ensembl" id="ENSMUST00000055558.6">
    <property type="protein sequence ID" value="ENSMUSP00000056820.6"/>
    <property type="gene ID" value="ENSMUSG00000043505.9"/>
</dbReference>
<dbReference type="GeneID" id="317757"/>
<dbReference type="KEGG" id="mmu:317757"/>
<dbReference type="UCSC" id="uc009bvs.1">
    <property type="organism name" value="mouse"/>
</dbReference>
<dbReference type="AGR" id="MGI:2442232"/>
<dbReference type="CTD" id="55340"/>
<dbReference type="MGI" id="MGI:2442232">
    <property type="gene designation" value="Gimap5"/>
</dbReference>
<dbReference type="VEuPathDB" id="HostDB:ENSMUSG00000043505"/>
<dbReference type="eggNOG" id="ENOG502RB0C">
    <property type="taxonomic scope" value="Eukaryota"/>
</dbReference>
<dbReference type="GeneTree" id="ENSGT00940000154844"/>
<dbReference type="HOGENOM" id="CLU_010468_1_1_1"/>
<dbReference type="InParanoid" id="Q8BWF2"/>
<dbReference type="OMA" id="RTCQAET"/>
<dbReference type="OrthoDB" id="8954335at2759"/>
<dbReference type="PhylomeDB" id="Q8BWF2"/>
<dbReference type="TreeFam" id="TF330845"/>
<dbReference type="BioGRID-ORCS" id="317757">
    <property type="hits" value="3 hits in 78 CRISPR screens"/>
</dbReference>
<dbReference type="ChiTaRS" id="Gimap3">
    <property type="organism name" value="mouse"/>
</dbReference>
<dbReference type="PRO" id="PR:Q8BWF2"/>
<dbReference type="Proteomes" id="UP000000589">
    <property type="component" value="Chromosome 6"/>
</dbReference>
<dbReference type="RNAct" id="Q8BWF2">
    <property type="molecule type" value="protein"/>
</dbReference>
<dbReference type="Bgee" id="ENSMUSG00000043505">
    <property type="expression patterns" value="Expressed in mesenteric lymph node and 76 other cell types or tissues"/>
</dbReference>
<dbReference type="GO" id="GO:0005765">
    <property type="term" value="C:lysosomal membrane"/>
    <property type="evidence" value="ECO:0007669"/>
    <property type="project" value="UniProtKB-SubCell"/>
</dbReference>
<dbReference type="GO" id="GO:0032585">
    <property type="term" value="C:multivesicular body membrane"/>
    <property type="evidence" value="ECO:0007669"/>
    <property type="project" value="UniProtKB-SubCell"/>
</dbReference>
<dbReference type="GO" id="GO:0005525">
    <property type="term" value="F:GTP binding"/>
    <property type="evidence" value="ECO:0007669"/>
    <property type="project" value="UniProtKB-KW"/>
</dbReference>
<dbReference type="CDD" id="cd01852">
    <property type="entry name" value="AIG1"/>
    <property type="match status" value="1"/>
</dbReference>
<dbReference type="FunFam" id="3.40.50.300:FF:000366">
    <property type="entry name" value="GTPase, IMAP family member 2"/>
    <property type="match status" value="1"/>
</dbReference>
<dbReference type="Gene3D" id="3.40.50.300">
    <property type="entry name" value="P-loop containing nucleotide triphosphate hydrolases"/>
    <property type="match status" value="1"/>
</dbReference>
<dbReference type="InterPro" id="IPR006703">
    <property type="entry name" value="G_AIG1"/>
</dbReference>
<dbReference type="InterPro" id="IPR045058">
    <property type="entry name" value="GIMA/IAN/Toc"/>
</dbReference>
<dbReference type="InterPro" id="IPR027417">
    <property type="entry name" value="P-loop_NTPase"/>
</dbReference>
<dbReference type="PANTHER" id="PTHR10903:SF69">
    <property type="entry name" value="GTPASE IMAP FAMILY MEMBER 5"/>
    <property type="match status" value="1"/>
</dbReference>
<dbReference type="PANTHER" id="PTHR10903">
    <property type="entry name" value="GTPASE, IMAP FAMILY MEMBER-RELATED"/>
    <property type="match status" value="1"/>
</dbReference>
<dbReference type="Pfam" id="PF04548">
    <property type="entry name" value="AIG1"/>
    <property type="match status" value="1"/>
</dbReference>
<dbReference type="SUPFAM" id="SSF52540">
    <property type="entry name" value="P-loop containing nucleoside triphosphate hydrolases"/>
    <property type="match status" value="1"/>
</dbReference>
<dbReference type="PROSITE" id="PS51720">
    <property type="entry name" value="G_AIG1"/>
    <property type="match status" value="1"/>
</dbReference>
<evidence type="ECO:0000250" key="1">
    <source>
        <dbReference type="UniProtKB" id="Q8K3L6"/>
    </source>
</evidence>
<evidence type="ECO:0000250" key="2">
    <source>
        <dbReference type="UniProtKB" id="Q8WWP7"/>
    </source>
</evidence>
<evidence type="ECO:0000250" key="3">
    <source>
        <dbReference type="UniProtKB" id="Q9UG22"/>
    </source>
</evidence>
<evidence type="ECO:0000255" key="4"/>
<evidence type="ECO:0000255" key="5">
    <source>
        <dbReference type="PROSITE-ProRule" id="PRU01057"/>
    </source>
</evidence>
<evidence type="ECO:0000269" key="6">
    <source>
    </source>
</evidence>
<evidence type="ECO:0000269" key="7">
    <source>
    </source>
</evidence>
<evidence type="ECO:0000269" key="8">
    <source>
    </source>
</evidence>
<evidence type="ECO:0000269" key="9">
    <source>
    </source>
</evidence>
<evidence type="ECO:0000269" key="10">
    <source>
    </source>
</evidence>
<evidence type="ECO:0000269" key="11">
    <source>
    </source>
</evidence>
<evidence type="ECO:0000269" key="12">
    <source>
    </source>
</evidence>
<evidence type="ECO:0000303" key="13">
    <source>
    </source>
</evidence>
<evidence type="ECO:0000305" key="14"/>
<protein>
    <recommendedName>
        <fullName>GTPase IMAP family member 5</fullName>
    </recommendedName>
    <alternativeName>
        <fullName evidence="13">GTPase of the immunity-associated protein 5</fullName>
    </alternativeName>
    <alternativeName>
        <fullName>Immunity-associated nucleotide 4-like 1 protein</fullName>
    </alternativeName>
    <alternativeName>
        <fullName>Immunity-associated protein 3</fullName>
    </alternativeName>
</protein>